<accession>A9ITX6</accession>
<protein>
    <recommendedName>
        <fullName evidence="2">Translation initiation factor IF-2</fullName>
    </recommendedName>
</protein>
<evidence type="ECO:0000250" key="1"/>
<evidence type="ECO:0000255" key="2">
    <source>
        <dbReference type="HAMAP-Rule" id="MF_00100"/>
    </source>
</evidence>
<evidence type="ECO:0000256" key="3">
    <source>
        <dbReference type="SAM" id="MobiDB-lite"/>
    </source>
</evidence>
<name>IF2_BORPD</name>
<gene>
    <name evidence="2" type="primary">infB</name>
    <name type="ordered locus">Bpet3133</name>
</gene>
<dbReference type="EMBL" id="AM902716">
    <property type="protein sequence ID" value="CAP43475.1"/>
    <property type="molecule type" value="Genomic_DNA"/>
</dbReference>
<dbReference type="SMR" id="A9ITX6"/>
<dbReference type="STRING" id="94624.Bpet3133"/>
<dbReference type="KEGG" id="bpt:Bpet3133"/>
<dbReference type="eggNOG" id="COG0532">
    <property type="taxonomic scope" value="Bacteria"/>
</dbReference>
<dbReference type="Proteomes" id="UP000001225">
    <property type="component" value="Chromosome"/>
</dbReference>
<dbReference type="GO" id="GO:0005829">
    <property type="term" value="C:cytosol"/>
    <property type="evidence" value="ECO:0007669"/>
    <property type="project" value="TreeGrafter"/>
</dbReference>
<dbReference type="GO" id="GO:0005525">
    <property type="term" value="F:GTP binding"/>
    <property type="evidence" value="ECO:0007669"/>
    <property type="project" value="UniProtKB-KW"/>
</dbReference>
<dbReference type="GO" id="GO:0003924">
    <property type="term" value="F:GTPase activity"/>
    <property type="evidence" value="ECO:0007669"/>
    <property type="project" value="UniProtKB-UniRule"/>
</dbReference>
<dbReference type="GO" id="GO:0097216">
    <property type="term" value="F:guanosine tetraphosphate binding"/>
    <property type="evidence" value="ECO:0007669"/>
    <property type="project" value="UniProtKB-ARBA"/>
</dbReference>
<dbReference type="GO" id="GO:0003743">
    <property type="term" value="F:translation initiation factor activity"/>
    <property type="evidence" value="ECO:0007669"/>
    <property type="project" value="UniProtKB-UniRule"/>
</dbReference>
<dbReference type="CDD" id="cd01887">
    <property type="entry name" value="IF2_eIF5B"/>
    <property type="match status" value="1"/>
</dbReference>
<dbReference type="CDD" id="cd03702">
    <property type="entry name" value="IF2_mtIF2_II"/>
    <property type="match status" value="1"/>
</dbReference>
<dbReference type="CDD" id="cd03692">
    <property type="entry name" value="mtIF2_IVc"/>
    <property type="match status" value="1"/>
</dbReference>
<dbReference type="FunFam" id="2.40.30.10:FF:000007">
    <property type="entry name" value="Translation initiation factor IF-2"/>
    <property type="match status" value="1"/>
</dbReference>
<dbReference type="FunFam" id="2.40.30.10:FF:000008">
    <property type="entry name" value="Translation initiation factor IF-2"/>
    <property type="match status" value="1"/>
</dbReference>
<dbReference type="FunFam" id="3.40.50.10050:FF:000001">
    <property type="entry name" value="Translation initiation factor IF-2"/>
    <property type="match status" value="1"/>
</dbReference>
<dbReference type="FunFam" id="3.40.50.300:FF:000019">
    <property type="entry name" value="Translation initiation factor IF-2"/>
    <property type="match status" value="1"/>
</dbReference>
<dbReference type="Gene3D" id="3.40.50.300">
    <property type="entry name" value="P-loop containing nucleotide triphosphate hydrolases"/>
    <property type="match status" value="1"/>
</dbReference>
<dbReference type="Gene3D" id="3.30.56.50">
    <property type="entry name" value="Putative DNA-binding domain, N-terminal subdomain of bacterial translation initiation factor IF2"/>
    <property type="match status" value="1"/>
</dbReference>
<dbReference type="Gene3D" id="2.40.30.10">
    <property type="entry name" value="Translation factors"/>
    <property type="match status" value="2"/>
</dbReference>
<dbReference type="Gene3D" id="3.40.50.10050">
    <property type="entry name" value="Translation initiation factor IF- 2, domain 3"/>
    <property type="match status" value="1"/>
</dbReference>
<dbReference type="HAMAP" id="MF_00100_B">
    <property type="entry name" value="IF_2_B"/>
    <property type="match status" value="1"/>
</dbReference>
<dbReference type="InterPro" id="IPR009061">
    <property type="entry name" value="DNA-bd_dom_put_sf"/>
</dbReference>
<dbReference type="InterPro" id="IPR053905">
    <property type="entry name" value="EF-G-like_DII"/>
</dbReference>
<dbReference type="InterPro" id="IPR004161">
    <property type="entry name" value="EFTu-like_2"/>
</dbReference>
<dbReference type="InterPro" id="IPR013575">
    <property type="entry name" value="IF2_assoc_dom_bac"/>
</dbReference>
<dbReference type="InterPro" id="IPR044145">
    <property type="entry name" value="IF2_II"/>
</dbReference>
<dbReference type="InterPro" id="IPR006847">
    <property type="entry name" value="IF2_N"/>
</dbReference>
<dbReference type="InterPro" id="IPR027417">
    <property type="entry name" value="P-loop_NTPase"/>
</dbReference>
<dbReference type="InterPro" id="IPR005225">
    <property type="entry name" value="Small_GTP-bd"/>
</dbReference>
<dbReference type="InterPro" id="IPR000795">
    <property type="entry name" value="T_Tr_GTP-bd_dom"/>
</dbReference>
<dbReference type="InterPro" id="IPR000178">
    <property type="entry name" value="TF_IF2_bacterial-like"/>
</dbReference>
<dbReference type="InterPro" id="IPR015760">
    <property type="entry name" value="TIF_IF2"/>
</dbReference>
<dbReference type="InterPro" id="IPR023115">
    <property type="entry name" value="TIF_IF2_dom3"/>
</dbReference>
<dbReference type="InterPro" id="IPR036925">
    <property type="entry name" value="TIF_IF2_dom3_sf"/>
</dbReference>
<dbReference type="InterPro" id="IPR009000">
    <property type="entry name" value="Transl_B-barrel_sf"/>
</dbReference>
<dbReference type="NCBIfam" id="TIGR00487">
    <property type="entry name" value="IF-2"/>
    <property type="match status" value="1"/>
</dbReference>
<dbReference type="NCBIfam" id="TIGR00231">
    <property type="entry name" value="small_GTP"/>
    <property type="match status" value="1"/>
</dbReference>
<dbReference type="PANTHER" id="PTHR43381:SF5">
    <property type="entry name" value="TR-TYPE G DOMAIN-CONTAINING PROTEIN"/>
    <property type="match status" value="1"/>
</dbReference>
<dbReference type="PANTHER" id="PTHR43381">
    <property type="entry name" value="TRANSLATION INITIATION FACTOR IF-2-RELATED"/>
    <property type="match status" value="1"/>
</dbReference>
<dbReference type="Pfam" id="PF22042">
    <property type="entry name" value="EF-G_D2"/>
    <property type="match status" value="1"/>
</dbReference>
<dbReference type="Pfam" id="PF00009">
    <property type="entry name" value="GTP_EFTU"/>
    <property type="match status" value="1"/>
</dbReference>
<dbReference type="Pfam" id="PF03144">
    <property type="entry name" value="GTP_EFTU_D2"/>
    <property type="match status" value="1"/>
</dbReference>
<dbReference type="Pfam" id="PF11987">
    <property type="entry name" value="IF-2"/>
    <property type="match status" value="1"/>
</dbReference>
<dbReference type="Pfam" id="PF08364">
    <property type="entry name" value="IF2_assoc"/>
    <property type="match status" value="1"/>
</dbReference>
<dbReference type="Pfam" id="PF04760">
    <property type="entry name" value="IF2_N"/>
    <property type="match status" value="2"/>
</dbReference>
<dbReference type="SUPFAM" id="SSF52156">
    <property type="entry name" value="Initiation factor IF2/eIF5b, domain 3"/>
    <property type="match status" value="1"/>
</dbReference>
<dbReference type="SUPFAM" id="SSF52540">
    <property type="entry name" value="P-loop containing nucleoside triphosphate hydrolases"/>
    <property type="match status" value="1"/>
</dbReference>
<dbReference type="SUPFAM" id="SSF46955">
    <property type="entry name" value="Putative DNA-binding domain"/>
    <property type="match status" value="1"/>
</dbReference>
<dbReference type="SUPFAM" id="SSF50447">
    <property type="entry name" value="Translation proteins"/>
    <property type="match status" value="2"/>
</dbReference>
<dbReference type="PROSITE" id="PS51722">
    <property type="entry name" value="G_TR_2"/>
    <property type="match status" value="1"/>
</dbReference>
<dbReference type="PROSITE" id="PS01176">
    <property type="entry name" value="IF2"/>
    <property type="match status" value="1"/>
</dbReference>
<proteinExistence type="inferred from homology"/>
<feature type="chain" id="PRO_1000093760" description="Translation initiation factor IF-2">
    <location>
        <begin position="1"/>
        <end position="991"/>
    </location>
</feature>
<feature type="domain" description="tr-type G">
    <location>
        <begin position="492"/>
        <end position="659"/>
    </location>
</feature>
<feature type="region of interest" description="Disordered" evidence="3">
    <location>
        <begin position="58"/>
        <end position="82"/>
    </location>
</feature>
<feature type="region of interest" description="Disordered" evidence="3">
    <location>
        <begin position="106"/>
        <end position="405"/>
    </location>
</feature>
<feature type="region of interest" description="G1" evidence="1">
    <location>
        <begin position="501"/>
        <end position="508"/>
    </location>
</feature>
<feature type="region of interest" description="G2" evidence="1">
    <location>
        <begin position="526"/>
        <end position="530"/>
    </location>
</feature>
<feature type="region of interest" description="G3" evidence="1">
    <location>
        <begin position="547"/>
        <end position="550"/>
    </location>
</feature>
<feature type="region of interest" description="G4" evidence="1">
    <location>
        <begin position="601"/>
        <end position="604"/>
    </location>
</feature>
<feature type="region of interest" description="G5" evidence="1">
    <location>
        <begin position="637"/>
        <end position="639"/>
    </location>
</feature>
<feature type="compositionally biased region" description="Low complexity" evidence="3">
    <location>
        <begin position="106"/>
        <end position="164"/>
    </location>
</feature>
<feature type="compositionally biased region" description="Pro residues" evidence="3">
    <location>
        <begin position="165"/>
        <end position="175"/>
    </location>
</feature>
<feature type="compositionally biased region" description="Low complexity" evidence="3">
    <location>
        <begin position="190"/>
        <end position="206"/>
    </location>
</feature>
<feature type="compositionally biased region" description="Low complexity" evidence="3">
    <location>
        <begin position="221"/>
        <end position="258"/>
    </location>
</feature>
<feature type="compositionally biased region" description="Low complexity" evidence="3">
    <location>
        <begin position="267"/>
        <end position="276"/>
    </location>
</feature>
<feature type="compositionally biased region" description="Basic and acidic residues" evidence="3">
    <location>
        <begin position="279"/>
        <end position="289"/>
    </location>
</feature>
<feature type="compositionally biased region" description="Gly residues" evidence="3">
    <location>
        <begin position="379"/>
        <end position="388"/>
    </location>
</feature>
<feature type="compositionally biased region" description="Basic and acidic residues" evidence="3">
    <location>
        <begin position="395"/>
        <end position="405"/>
    </location>
</feature>
<feature type="binding site" evidence="2">
    <location>
        <begin position="501"/>
        <end position="508"/>
    </location>
    <ligand>
        <name>GTP</name>
        <dbReference type="ChEBI" id="CHEBI:37565"/>
    </ligand>
</feature>
<feature type="binding site" evidence="2">
    <location>
        <begin position="547"/>
        <end position="551"/>
    </location>
    <ligand>
        <name>GTP</name>
        <dbReference type="ChEBI" id="CHEBI:37565"/>
    </ligand>
</feature>
<feature type="binding site" evidence="2">
    <location>
        <begin position="601"/>
        <end position="604"/>
    </location>
    <ligand>
        <name>GTP</name>
        <dbReference type="ChEBI" id="CHEBI:37565"/>
    </ligand>
</feature>
<comment type="function">
    <text evidence="2">One of the essential components for the initiation of protein synthesis. Protects formylmethionyl-tRNA from spontaneous hydrolysis and promotes its binding to the 30S ribosomal subunits. Also involved in the hydrolysis of GTP during the formation of the 70S ribosomal complex.</text>
</comment>
<comment type="subcellular location">
    <subcellularLocation>
        <location evidence="2">Cytoplasm</location>
    </subcellularLocation>
</comment>
<comment type="similarity">
    <text evidence="2">Belongs to the TRAFAC class translation factor GTPase superfamily. Classic translation factor GTPase family. IF-2 subfamily.</text>
</comment>
<reference key="1">
    <citation type="journal article" date="2008" name="BMC Genomics">
        <title>The missing link: Bordetella petrii is endowed with both the metabolic versatility of environmental bacteria and virulence traits of pathogenic Bordetellae.</title>
        <authorList>
            <person name="Gross R."/>
            <person name="Guzman C.A."/>
            <person name="Sebaihia M."/>
            <person name="Martin dos Santos V.A.P."/>
            <person name="Pieper D.H."/>
            <person name="Koebnik R."/>
            <person name="Lechner M."/>
            <person name="Bartels D."/>
            <person name="Buhrmester J."/>
            <person name="Choudhuri J.V."/>
            <person name="Ebensen T."/>
            <person name="Gaigalat L."/>
            <person name="Herrmann S."/>
            <person name="Khachane A.N."/>
            <person name="Larisch C."/>
            <person name="Link S."/>
            <person name="Linke B."/>
            <person name="Meyer F."/>
            <person name="Mormann S."/>
            <person name="Nakunst D."/>
            <person name="Rueckert C."/>
            <person name="Schneiker-Bekel S."/>
            <person name="Schulze K."/>
            <person name="Voerholter F.-J."/>
            <person name="Yevsa T."/>
            <person name="Engle J.T."/>
            <person name="Goldman W.E."/>
            <person name="Puehler A."/>
            <person name="Goebel U.B."/>
            <person name="Goesmann A."/>
            <person name="Bloecker H."/>
            <person name="Kaiser O."/>
            <person name="Martinez-Arias R."/>
        </authorList>
    </citation>
    <scope>NUCLEOTIDE SEQUENCE [LARGE SCALE GENOMIC DNA]</scope>
    <source>
        <strain>ATCC BAA-461 / DSM 12804 / CCUG 43448</strain>
    </source>
</reference>
<keyword id="KW-0963">Cytoplasm</keyword>
<keyword id="KW-0342">GTP-binding</keyword>
<keyword id="KW-0396">Initiation factor</keyword>
<keyword id="KW-0547">Nucleotide-binding</keyword>
<keyword id="KW-0648">Protein biosynthesis</keyword>
<organism>
    <name type="scientific">Bordetella petrii (strain ATCC BAA-461 / DSM 12804 / CCUG 43448)</name>
    <dbReference type="NCBI Taxonomy" id="340100"/>
    <lineage>
        <taxon>Bacteria</taxon>
        <taxon>Pseudomonadati</taxon>
        <taxon>Pseudomonadota</taxon>
        <taxon>Betaproteobacteria</taxon>
        <taxon>Burkholderiales</taxon>
        <taxon>Alcaligenaceae</taxon>
        <taxon>Bordetella</taxon>
    </lineage>
</organism>
<sequence length="991" mass="104344">MSSNTVAQFATELKMPANVLLEQLRSAGVDLNSVDDAVTDSDKAKLLDSLRRAHGATEGKKITLTRRQTSEIRQADATGRSRTIQVEVRKKRVFVKRDPSEIALEQARADAAASDAAPAEPAPAAAEPSASAPVTAPVNAPAADAPQAPATAAPDTAAPAAETPSQPPAVEPQPAPVAQAEPEPQPEPVAKPAEAPAEPAAPAAVEAHAEREAEQAPPEPAVQAEIETAPAPAAESAQAARPEPVTPKAEPAPAASKPARAEGRRGAPVPVAAPAVDSAGREEARRAAEAEAAALREMLNRPRKVLRAPEPEAGALSGTLHKPAGKAAAPGAKKDAKPGAGGSKKTIKTAEVASTWSDDASRKKPADTKSAAPSRDGWRAGGKGGKGGRNSRNQQAERRHEPAPQEFIAREVHVPETISVADLAHKMSVKAAEVIKQLMKLGQMVTINQVLDQETAMIVVEELGHVAIAAKLDDPEAFLDETPVASEAEALPRAPVVTVMGHVDHGKTSLLDYIRRAKVASGEAGGITQHIGAYHVETARGVVTFLDTPGHEAFTAMRARGAKATDIVILVVAADDGVMPQTREAIHHAKAGGVPLVVAVNKIDKPEANPERVKQELVAEEVVPEEYGGDVPFVPVSAKTGAGIDDLLENVLLQAEILELTAPVEAPAKGLVIEARLDKGRGPVATILVQSGTLKRGDVVLAGASFGRVRAMVDENGKQIQEAGPSIPVEIQGLTEVPAAGDELIALADERKAREIALFRQGKFRDVKLARQQAAKLESMFDNLGEGTQTLPLIVKTDVQGSQEALVASLTKLSTDEVRVQVVHAAVGGISESDINLAIASNAVVIGFNVRAEQSAKKLAESNGIDVRYYNIIYDAVDEVKAAMSGMLAPEKKEEVIGLVEVREVYSISRIGNVAGCMVLDGLVRRDSQIRLLRNNVVHWTGHLDSLRRFKDDVKEVKSGFDCGLTLRGSNDIQVGDQLEVFEIKEIARTL</sequence>